<accession>Q2Y7M8</accession>
<feature type="chain" id="PRO_0000236553" description="Large ribosomal subunit protein bL9">
    <location>
        <begin position="1"/>
        <end position="151"/>
    </location>
</feature>
<gene>
    <name evidence="1" type="primary">rplI</name>
    <name type="ordered locus">Nmul_A1948</name>
</gene>
<name>RL9_NITMU</name>
<sequence length="151" mass="16177">MQIILMEKVVNLGQLGDVVKVKNGYARNFLIPQGKAKRATQAAVAEFESKRAELEKTQADILAAAQARAAKLEGLMLQVTQKAGVDGKLFGSVTNADIEDALKAQGFEVERSMIRMPQGSLKQVGDHPVTIVLHTDVAAHIIVSVLGESVS</sequence>
<organism>
    <name type="scientific">Nitrosospira multiformis (strain ATCC 25196 / NCIMB 11849 / C 71)</name>
    <dbReference type="NCBI Taxonomy" id="323848"/>
    <lineage>
        <taxon>Bacteria</taxon>
        <taxon>Pseudomonadati</taxon>
        <taxon>Pseudomonadota</taxon>
        <taxon>Betaproteobacteria</taxon>
        <taxon>Nitrosomonadales</taxon>
        <taxon>Nitrosomonadaceae</taxon>
        <taxon>Nitrosospira</taxon>
    </lineage>
</organism>
<comment type="function">
    <text evidence="1">Binds to the 23S rRNA.</text>
</comment>
<comment type="similarity">
    <text evidence="1">Belongs to the bacterial ribosomal protein bL9 family.</text>
</comment>
<reference key="1">
    <citation type="submission" date="2005-08" db="EMBL/GenBank/DDBJ databases">
        <title>Complete sequence of chromosome 1 of Nitrosospira multiformis ATCC 25196.</title>
        <authorList>
            <person name="Copeland A."/>
            <person name="Lucas S."/>
            <person name="Lapidus A."/>
            <person name="Barry K."/>
            <person name="Detter J.C."/>
            <person name="Glavina T."/>
            <person name="Hammon N."/>
            <person name="Israni S."/>
            <person name="Pitluck S."/>
            <person name="Chain P."/>
            <person name="Malfatti S."/>
            <person name="Shin M."/>
            <person name="Vergez L."/>
            <person name="Schmutz J."/>
            <person name="Larimer F."/>
            <person name="Land M."/>
            <person name="Hauser L."/>
            <person name="Kyrpides N."/>
            <person name="Lykidis A."/>
            <person name="Richardson P."/>
        </authorList>
    </citation>
    <scope>NUCLEOTIDE SEQUENCE [LARGE SCALE GENOMIC DNA]</scope>
    <source>
        <strain>ATCC 25196 / NCIMB 11849 / C 71</strain>
    </source>
</reference>
<evidence type="ECO:0000255" key="1">
    <source>
        <dbReference type="HAMAP-Rule" id="MF_00503"/>
    </source>
</evidence>
<evidence type="ECO:0000305" key="2"/>
<protein>
    <recommendedName>
        <fullName evidence="1">Large ribosomal subunit protein bL9</fullName>
    </recommendedName>
    <alternativeName>
        <fullName evidence="2">50S ribosomal protein L9</fullName>
    </alternativeName>
</protein>
<proteinExistence type="inferred from homology"/>
<dbReference type="EMBL" id="CP000103">
    <property type="protein sequence ID" value="ABB75243.1"/>
    <property type="molecule type" value="Genomic_DNA"/>
</dbReference>
<dbReference type="RefSeq" id="WP_011381263.1">
    <property type="nucleotide sequence ID" value="NC_007614.1"/>
</dbReference>
<dbReference type="SMR" id="Q2Y7M8"/>
<dbReference type="STRING" id="323848.Nmul_A1948"/>
<dbReference type="KEGG" id="nmu:Nmul_A1948"/>
<dbReference type="eggNOG" id="COG0359">
    <property type="taxonomic scope" value="Bacteria"/>
</dbReference>
<dbReference type="HOGENOM" id="CLU_078938_4_1_4"/>
<dbReference type="OrthoDB" id="9788336at2"/>
<dbReference type="Proteomes" id="UP000002718">
    <property type="component" value="Chromosome"/>
</dbReference>
<dbReference type="GO" id="GO:1990904">
    <property type="term" value="C:ribonucleoprotein complex"/>
    <property type="evidence" value="ECO:0007669"/>
    <property type="project" value="UniProtKB-KW"/>
</dbReference>
<dbReference type="GO" id="GO:0005840">
    <property type="term" value="C:ribosome"/>
    <property type="evidence" value="ECO:0007669"/>
    <property type="project" value="UniProtKB-KW"/>
</dbReference>
<dbReference type="GO" id="GO:0019843">
    <property type="term" value="F:rRNA binding"/>
    <property type="evidence" value="ECO:0007669"/>
    <property type="project" value="UniProtKB-UniRule"/>
</dbReference>
<dbReference type="GO" id="GO:0003735">
    <property type="term" value="F:structural constituent of ribosome"/>
    <property type="evidence" value="ECO:0007669"/>
    <property type="project" value="InterPro"/>
</dbReference>
<dbReference type="GO" id="GO:0006412">
    <property type="term" value="P:translation"/>
    <property type="evidence" value="ECO:0007669"/>
    <property type="project" value="UniProtKB-UniRule"/>
</dbReference>
<dbReference type="Gene3D" id="3.10.430.100">
    <property type="entry name" value="Ribosomal protein L9, C-terminal domain"/>
    <property type="match status" value="1"/>
</dbReference>
<dbReference type="Gene3D" id="3.40.5.10">
    <property type="entry name" value="Ribosomal protein L9, N-terminal domain"/>
    <property type="match status" value="1"/>
</dbReference>
<dbReference type="HAMAP" id="MF_00503">
    <property type="entry name" value="Ribosomal_bL9"/>
    <property type="match status" value="1"/>
</dbReference>
<dbReference type="InterPro" id="IPR000244">
    <property type="entry name" value="Ribosomal_bL9"/>
</dbReference>
<dbReference type="InterPro" id="IPR009027">
    <property type="entry name" value="Ribosomal_bL9/RNase_H1_N"/>
</dbReference>
<dbReference type="InterPro" id="IPR020594">
    <property type="entry name" value="Ribosomal_bL9_bac/chp"/>
</dbReference>
<dbReference type="InterPro" id="IPR020069">
    <property type="entry name" value="Ribosomal_bL9_C"/>
</dbReference>
<dbReference type="InterPro" id="IPR036791">
    <property type="entry name" value="Ribosomal_bL9_C_sf"/>
</dbReference>
<dbReference type="InterPro" id="IPR020070">
    <property type="entry name" value="Ribosomal_bL9_N"/>
</dbReference>
<dbReference type="InterPro" id="IPR036935">
    <property type="entry name" value="Ribosomal_bL9_N_sf"/>
</dbReference>
<dbReference type="NCBIfam" id="TIGR00158">
    <property type="entry name" value="L9"/>
    <property type="match status" value="1"/>
</dbReference>
<dbReference type="PANTHER" id="PTHR21368">
    <property type="entry name" value="50S RIBOSOMAL PROTEIN L9"/>
    <property type="match status" value="1"/>
</dbReference>
<dbReference type="Pfam" id="PF03948">
    <property type="entry name" value="Ribosomal_L9_C"/>
    <property type="match status" value="1"/>
</dbReference>
<dbReference type="Pfam" id="PF01281">
    <property type="entry name" value="Ribosomal_L9_N"/>
    <property type="match status" value="1"/>
</dbReference>
<dbReference type="SUPFAM" id="SSF55658">
    <property type="entry name" value="L9 N-domain-like"/>
    <property type="match status" value="1"/>
</dbReference>
<dbReference type="SUPFAM" id="SSF55653">
    <property type="entry name" value="Ribosomal protein L9 C-domain"/>
    <property type="match status" value="1"/>
</dbReference>
<dbReference type="PROSITE" id="PS00651">
    <property type="entry name" value="RIBOSOMAL_L9"/>
    <property type="match status" value="1"/>
</dbReference>
<keyword id="KW-1185">Reference proteome</keyword>
<keyword id="KW-0687">Ribonucleoprotein</keyword>
<keyword id="KW-0689">Ribosomal protein</keyword>
<keyword id="KW-0694">RNA-binding</keyword>
<keyword id="KW-0699">rRNA-binding</keyword>